<comment type="function">
    <text evidence="1">Catalyzes the cyclization of GTP to (8S)-3',8-cyclo-7,8-dihydroguanosine 5'-triphosphate.</text>
</comment>
<comment type="catalytic activity">
    <reaction evidence="1">
        <text>GTP + AH2 + S-adenosyl-L-methionine = (8S)-3',8-cyclo-7,8-dihydroguanosine 5'-triphosphate + 5'-deoxyadenosine + L-methionine + A + H(+)</text>
        <dbReference type="Rhea" id="RHEA:49576"/>
        <dbReference type="ChEBI" id="CHEBI:13193"/>
        <dbReference type="ChEBI" id="CHEBI:15378"/>
        <dbReference type="ChEBI" id="CHEBI:17319"/>
        <dbReference type="ChEBI" id="CHEBI:17499"/>
        <dbReference type="ChEBI" id="CHEBI:37565"/>
        <dbReference type="ChEBI" id="CHEBI:57844"/>
        <dbReference type="ChEBI" id="CHEBI:59789"/>
        <dbReference type="ChEBI" id="CHEBI:131766"/>
        <dbReference type="EC" id="4.1.99.22"/>
    </reaction>
</comment>
<comment type="cofactor">
    <cofactor evidence="1">
        <name>[4Fe-4S] cluster</name>
        <dbReference type="ChEBI" id="CHEBI:49883"/>
    </cofactor>
    <text evidence="1">Binds 2 [4Fe-4S] clusters. Binds 1 [4Fe-4S] cluster coordinated with 3 cysteines and an exchangeable S-adenosyl-L-methionine and 1 [4Fe-4S] cluster coordinated with 3 cysteines and the GTP-derived substrate.</text>
</comment>
<comment type="pathway">
    <text evidence="1">Cofactor biosynthesis; molybdopterin biosynthesis.</text>
</comment>
<comment type="subunit">
    <text evidence="1">Monomer and homodimer.</text>
</comment>
<comment type="similarity">
    <text evidence="1">Belongs to the radical SAM superfamily. MoaA family.</text>
</comment>
<sequence>MEKLYDSYDRLHDYVRLSITDRCNLRCVYCMPKEGLPFFPTDRVLSQDEIVQLIENFAAMGVSKVRITGGEPLLRTDVVEIVRRIKAVDGINDVSITTNGLFLAKLAKPLKEAGLDRLNISLDTFKADRYKKITRGGNIQQVLDGIAVASKLHFKKIKLNIVLIKGQNDDEVLDFLHYTKDHDVNARFIEFMPIGNSLKTWQKEYVGLKNVFDTCKDNGLAYHPIVLRGNGPSDNYQIEGYEGSFGLIHPISSKFCENCNRLRITADGYVKACLYWNEEIDIRSAIGDPVAFRKLIQKALDNKPLNHEMAMSETDRIIDKAPTWRHMSQIGG</sequence>
<protein>
    <recommendedName>
        <fullName evidence="1">GTP 3',8-cyclase</fullName>
        <ecNumber evidence="1">4.1.99.22</ecNumber>
    </recommendedName>
    <alternativeName>
        <fullName evidence="1">Molybdenum cofactor biosynthesis protein A</fullName>
    </alternativeName>
</protein>
<name>MOAA_LACPL</name>
<proteinExistence type="inferred from homology"/>
<feature type="chain" id="PRO_0000152969" description="GTP 3',8-cyclase">
    <location>
        <begin position="1"/>
        <end position="332"/>
    </location>
</feature>
<feature type="domain" description="Radical SAM core" evidence="2">
    <location>
        <begin position="7"/>
        <end position="221"/>
    </location>
</feature>
<feature type="binding site" evidence="1">
    <location>
        <position position="16"/>
    </location>
    <ligand>
        <name>GTP</name>
        <dbReference type="ChEBI" id="CHEBI:37565"/>
    </ligand>
</feature>
<feature type="binding site" evidence="1">
    <location>
        <position position="23"/>
    </location>
    <ligand>
        <name>[4Fe-4S] cluster</name>
        <dbReference type="ChEBI" id="CHEBI:49883"/>
        <label>1</label>
        <note>4Fe-4S-S-AdoMet</note>
    </ligand>
</feature>
<feature type="binding site" evidence="1">
    <location>
        <position position="27"/>
    </location>
    <ligand>
        <name>[4Fe-4S] cluster</name>
        <dbReference type="ChEBI" id="CHEBI:49883"/>
        <label>1</label>
        <note>4Fe-4S-S-AdoMet</note>
    </ligand>
</feature>
<feature type="binding site" evidence="1">
    <location>
        <position position="29"/>
    </location>
    <ligand>
        <name>S-adenosyl-L-methionine</name>
        <dbReference type="ChEBI" id="CHEBI:59789"/>
    </ligand>
</feature>
<feature type="binding site" evidence="1">
    <location>
        <position position="30"/>
    </location>
    <ligand>
        <name>[4Fe-4S] cluster</name>
        <dbReference type="ChEBI" id="CHEBI:49883"/>
        <label>1</label>
        <note>4Fe-4S-S-AdoMet</note>
    </ligand>
</feature>
<feature type="binding site" evidence="1">
    <location>
        <position position="66"/>
    </location>
    <ligand>
        <name>GTP</name>
        <dbReference type="ChEBI" id="CHEBI:37565"/>
    </ligand>
</feature>
<feature type="binding site" evidence="1">
    <location>
        <position position="70"/>
    </location>
    <ligand>
        <name>S-adenosyl-L-methionine</name>
        <dbReference type="ChEBI" id="CHEBI:59789"/>
    </ligand>
</feature>
<feature type="binding site" evidence="1">
    <location>
        <position position="97"/>
    </location>
    <ligand>
        <name>GTP</name>
        <dbReference type="ChEBI" id="CHEBI:37565"/>
    </ligand>
</feature>
<feature type="binding site" evidence="1">
    <location>
        <position position="121"/>
    </location>
    <ligand>
        <name>S-adenosyl-L-methionine</name>
        <dbReference type="ChEBI" id="CHEBI:59789"/>
    </ligand>
</feature>
<feature type="binding site" evidence="1">
    <location>
        <position position="158"/>
    </location>
    <ligand>
        <name>GTP</name>
        <dbReference type="ChEBI" id="CHEBI:37565"/>
    </ligand>
</feature>
<feature type="binding site" evidence="1">
    <location>
        <position position="192"/>
    </location>
    <ligand>
        <name>S-adenosyl-L-methionine</name>
        <dbReference type="ChEBI" id="CHEBI:59789"/>
    </ligand>
</feature>
<feature type="binding site" evidence="1">
    <location>
        <position position="256"/>
    </location>
    <ligand>
        <name>[4Fe-4S] cluster</name>
        <dbReference type="ChEBI" id="CHEBI:49883"/>
        <label>2</label>
        <note>4Fe-4S-substrate</note>
    </ligand>
</feature>
<feature type="binding site" evidence="1">
    <location>
        <position position="259"/>
    </location>
    <ligand>
        <name>[4Fe-4S] cluster</name>
        <dbReference type="ChEBI" id="CHEBI:49883"/>
        <label>2</label>
        <note>4Fe-4S-substrate</note>
    </ligand>
</feature>
<feature type="binding site" evidence="1">
    <location>
        <begin position="261"/>
        <end position="263"/>
    </location>
    <ligand>
        <name>GTP</name>
        <dbReference type="ChEBI" id="CHEBI:37565"/>
    </ligand>
</feature>
<feature type="binding site" evidence="1">
    <location>
        <position position="273"/>
    </location>
    <ligand>
        <name>[4Fe-4S] cluster</name>
        <dbReference type="ChEBI" id="CHEBI:49883"/>
        <label>2</label>
        <note>4Fe-4S-substrate</note>
    </ligand>
</feature>
<reference key="1">
    <citation type="journal article" date="2003" name="Proc. Natl. Acad. Sci. U.S.A.">
        <title>Complete genome sequence of Lactobacillus plantarum WCFS1.</title>
        <authorList>
            <person name="Kleerebezem M."/>
            <person name="Boekhorst J."/>
            <person name="van Kranenburg R."/>
            <person name="Molenaar D."/>
            <person name="Kuipers O.P."/>
            <person name="Leer R."/>
            <person name="Tarchini R."/>
            <person name="Peters S.A."/>
            <person name="Sandbrink H.M."/>
            <person name="Fiers M.W.E.J."/>
            <person name="Stiekema W."/>
            <person name="Klein Lankhorst R.M."/>
            <person name="Bron P.A."/>
            <person name="Hoffer S.M."/>
            <person name="Nierop Groot M.N."/>
            <person name="Kerkhoven R."/>
            <person name="De Vries M."/>
            <person name="Ursing B."/>
            <person name="De Vos W.M."/>
            <person name="Siezen R.J."/>
        </authorList>
    </citation>
    <scope>NUCLEOTIDE SEQUENCE [LARGE SCALE GENOMIC DNA]</scope>
    <source>
        <strain>ATCC BAA-793 / NCIMB 8826 / WCFS1</strain>
    </source>
</reference>
<reference key="2">
    <citation type="journal article" date="2012" name="J. Bacteriol.">
        <title>Complete resequencing and reannotation of the Lactobacillus plantarum WCFS1 genome.</title>
        <authorList>
            <person name="Siezen R.J."/>
            <person name="Francke C."/>
            <person name="Renckens B."/>
            <person name="Boekhorst J."/>
            <person name="Wels M."/>
            <person name="Kleerebezem M."/>
            <person name="van Hijum S.A."/>
        </authorList>
    </citation>
    <scope>NUCLEOTIDE SEQUENCE [LARGE SCALE GENOMIC DNA]</scope>
    <scope>GENOME REANNOTATION</scope>
    <source>
        <strain>ATCC BAA-793 / NCIMB 8826 / WCFS1</strain>
    </source>
</reference>
<gene>
    <name evidence="1" type="primary">moaA</name>
    <name type="ordered locus">lp_1480</name>
</gene>
<dbReference type="EC" id="4.1.99.22" evidence="1"/>
<dbReference type="EMBL" id="AL935263">
    <property type="protein sequence ID" value="CCC78808.1"/>
    <property type="molecule type" value="Genomic_DNA"/>
</dbReference>
<dbReference type="RefSeq" id="WP_011101426.1">
    <property type="nucleotide sequence ID" value="NC_004567.2"/>
</dbReference>
<dbReference type="RefSeq" id="YP_004889322.1">
    <property type="nucleotide sequence ID" value="NC_004567.2"/>
</dbReference>
<dbReference type="SMR" id="Q88WY1"/>
<dbReference type="STRING" id="220668.lp_1480"/>
<dbReference type="EnsemblBacteria" id="CCC78808">
    <property type="protein sequence ID" value="CCC78808"/>
    <property type="gene ID" value="lp_1480"/>
</dbReference>
<dbReference type="KEGG" id="lpl:lp_1480"/>
<dbReference type="PATRIC" id="fig|220668.9.peg.1242"/>
<dbReference type="eggNOG" id="COG2896">
    <property type="taxonomic scope" value="Bacteria"/>
</dbReference>
<dbReference type="HOGENOM" id="CLU_009273_0_1_9"/>
<dbReference type="OrthoDB" id="9763993at2"/>
<dbReference type="PhylomeDB" id="Q88WY1"/>
<dbReference type="UniPathway" id="UPA00344"/>
<dbReference type="Proteomes" id="UP000000432">
    <property type="component" value="Chromosome"/>
</dbReference>
<dbReference type="GO" id="GO:0051539">
    <property type="term" value="F:4 iron, 4 sulfur cluster binding"/>
    <property type="evidence" value="ECO:0007669"/>
    <property type="project" value="UniProtKB-UniRule"/>
</dbReference>
<dbReference type="GO" id="GO:0061799">
    <property type="term" value="F:cyclic pyranopterin monophosphate synthase activity"/>
    <property type="evidence" value="ECO:0007669"/>
    <property type="project" value="TreeGrafter"/>
</dbReference>
<dbReference type="GO" id="GO:0061798">
    <property type="term" value="F:GTP 3',8'-cyclase activity"/>
    <property type="evidence" value="ECO:0007669"/>
    <property type="project" value="UniProtKB-UniRule"/>
</dbReference>
<dbReference type="GO" id="GO:0005525">
    <property type="term" value="F:GTP binding"/>
    <property type="evidence" value="ECO:0007669"/>
    <property type="project" value="UniProtKB-UniRule"/>
</dbReference>
<dbReference type="GO" id="GO:0046872">
    <property type="term" value="F:metal ion binding"/>
    <property type="evidence" value="ECO:0007669"/>
    <property type="project" value="UniProtKB-KW"/>
</dbReference>
<dbReference type="GO" id="GO:1904047">
    <property type="term" value="F:S-adenosyl-L-methionine binding"/>
    <property type="evidence" value="ECO:0007669"/>
    <property type="project" value="UniProtKB-UniRule"/>
</dbReference>
<dbReference type="GO" id="GO:0006777">
    <property type="term" value="P:Mo-molybdopterin cofactor biosynthetic process"/>
    <property type="evidence" value="ECO:0007669"/>
    <property type="project" value="UniProtKB-UniRule"/>
</dbReference>
<dbReference type="CDD" id="cd01335">
    <property type="entry name" value="Radical_SAM"/>
    <property type="match status" value="1"/>
</dbReference>
<dbReference type="CDD" id="cd21117">
    <property type="entry name" value="Twitch_MoaA"/>
    <property type="match status" value="1"/>
</dbReference>
<dbReference type="Gene3D" id="3.20.20.70">
    <property type="entry name" value="Aldolase class I"/>
    <property type="match status" value="1"/>
</dbReference>
<dbReference type="HAMAP" id="MF_01225_B">
    <property type="entry name" value="MoaA_B"/>
    <property type="match status" value="1"/>
</dbReference>
<dbReference type="InterPro" id="IPR013785">
    <property type="entry name" value="Aldolase_TIM"/>
</dbReference>
<dbReference type="InterPro" id="IPR006638">
    <property type="entry name" value="Elp3/MiaA/NifB-like_rSAM"/>
</dbReference>
<dbReference type="InterPro" id="IPR013483">
    <property type="entry name" value="MoaA"/>
</dbReference>
<dbReference type="InterPro" id="IPR000385">
    <property type="entry name" value="MoaA_NifB_PqqE_Fe-S-bd_CS"/>
</dbReference>
<dbReference type="InterPro" id="IPR010505">
    <property type="entry name" value="MoaA_twitch"/>
</dbReference>
<dbReference type="InterPro" id="IPR050105">
    <property type="entry name" value="MoCo_biosynth_MoaA/MoaC"/>
</dbReference>
<dbReference type="InterPro" id="IPR007197">
    <property type="entry name" value="rSAM"/>
</dbReference>
<dbReference type="NCBIfam" id="TIGR02666">
    <property type="entry name" value="moaA"/>
    <property type="match status" value="1"/>
</dbReference>
<dbReference type="NCBIfam" id="NF001199">
    <property type="entry name" value="PRK00164.2-1"/>
    <property type="match status" value="1"/>
</dbReference>
<dbReference type="PANTHER" id="PTHR22960:SF0">
    <property type="entry name" value="MOLYBDENUM COFACTOR BIOSYNTHESIS PROTEIN 1"/>
    <property type="match status" value="1"/>
</dbReference>
<dbReference type="PANTHER" id="PTHR22960">
    <property type="entry name" value="MOLYBDOPTERIN COFACTOR SYNTHESIS PROTEIN A"/>
    <property type="match status" value="1"/>
</dbReference>
<dbReference type="Pfam" id="PF13353">
    <property type="entry name" value="Fer4_12"/>
    <property type="match status" value="1"/>
</dbReference>
<dbReference type="Pfam" id="PF06463">
    <property type="entry name" value="Mob_synth_C"/>
    <property type="match status" value="1"/>
</dbReference>
<dbReference type="Pfam" id="PF04055">
    <property type="entry name" value="Radical_SAM"/>
    <property type="match status" value="1"/>
</dbReference>
<dbReference type="SFLD" id="SFLDG01383">
    <property type="entry name" value="cyclic_pyranopterin_phosphate"/>
    <property type="match status" value="1"/>
</dbReference>
<dbReference type="SFLD" id="SFLDG01386">
    <property type="entry name" value="main_SPASM_domain-containing"/>
    <property type="match status" value="1"/>
</dbReference>
<dbReference type="SMART" id="SM00729">
    <property type="entry name" value="Elp3"/>
    <property type="match status" value="1"/>
</dbReference>
<dbReference type="SUPFAM" id="SSF102114">
    <property type="entry name" value="Radical SAM enzymes"/>
    <property type="match status" value="1"/>
</dbReference>
<dbReference type="PROSITE" id="PS01305">
    <property type="entry name" value="MOAA_NIFB_PQQE"/>
    <property type="match status" value="1"/>
</dbReference>
<dbReference type="PROSITE" id="PS51918">
    <property type="entry name" value="RADICAL_SAM"/>
    <property type="match status" value="1"/>
</dbReference>
<organism>
    <name type="scientific">Lactiplantibacillus plantarum (strain ATCC BAA-793 / NCIMB 8826 / WCFS1)</name>
    <name type="common">Lactobacillus plantarum</name>
    <dbReference type="NCBI Taxonomy" id="220668"/>
    <lineage>
        <taxon>Bacteria</taxon>
        <taxon>Bacillati</taxon>
        <taxon>Bacillota</taxon>
        <taxon>Bacilli</taxon>
        <taxon>Lactobacillales</taxon>
        <taxon>Lactobacillaceae</taxon>
        <taxon>Lactiplantibacillus</taxon>
    </lineage>
</organism>
<evidence type="ECO:0000255" key="1">
    <source>
        <dbReference type="HAMAP-Rule" id="MF_01225"/>
    </source>
</evidence>
<evidence type="ECO:0000255" key="2">
    <source>
        <dbReference type="PROSITE-ProRule" id="PRU01266"/>
    </source>
</evidence>
<keyword id="KW-0004">4Fe-4S</keyword>
<keyword id="KW-0342">GTP-binding</keyword>
<keyword id="KW-0408">Iron</keyword>
<keyword id="KW-0411">Iron-sulfur</keyword>
<keyword id="KW-0456">Lyase</keyword>
<keyword id="KW-0479">Metal-binding</keyword>
<keyword id="KW-0501">Molybdenum cofactor biosynthesis</keyword>
<keyword id="KW-0547">Nucleotide-binding</keyword>
<keyword id="KW-1185">Reference proteome</keyword>
<keyword id="KW-0949">S-adenosyl-L-methionine</keyword>
<accession>Q88WY1</accession>
<accession>F9UNL9</accession>